<organism>
    <name type="scientific">Mycobacterium sp. (strain KMS)</name>
    <dbReference type="NCBI Taxonomy" id="189918"/>
    <lineage>
        <taxon>Bacteria</taxon>
        <taxon>Bacillati</taxon>
        <taxon>Actinomycetota</taxon>
        <taxon>Actinomycetes</taxon>
        <taxon>Mycobacteriales</taxon>
        <taxon>Mycobacteriaceae</taxon>
        <taxon>Mycobacterium</taxon>
    </lineage>
</organism>
<protein>
    <recommendedName>
        <fullName evidence="1">Holliday junction branch migration complex subunit RuvB</fullName>
        <ecNumber evidence="1">3.6.4.-</ecNumber>
    </recommendedName>
</protein>
<name>RUVB_MYCSK</name>
<sequence length="357" mass="37803">MGRFDDAGAQDAEPDDRDVSPALTVGEGDIDASLRPRSLGEFIGQPRVREQLQLVLEGAKNRGGTPDHILLSGPPGLGKTSLAMIIAAELSSSLRVTSGPALERAGDLAAMLSNLVEGDVLFIDEIHRIARPAEEMLYLAMEDFRVDVVVGKGPGATSIPLEVAPFTLVGATTRSGALTGPLRDRFGFTAHMDFYEPAELERVLARSAGILGIHLGTEAGAEIARRSRGTPRIANRLLRRVRDYAEVRADGVITRDIAKAALEVYDVDELGLDRLDRAVLSALIRSFGGGPVGVSTLAVAVGEEPTTVEEVCEPFLVRAGMIARTPRGRVATASAWTHLGLTPPSGITGLGQTGLFD</sequence>
<gene>
    <name evidence="1" type="primary">ruvB</name>
    <name type="ordered locus">Mkms_2314</name>
</gene>
<reference key="1">
    <citation type="submission" date="2006-12" db="EMBL/GenBank/DDBJ databases">
        <title>Complete sequence of chromosome of Mycobacterium sp. KMS.</title>
        <authorList>
            <consortium name="US DOE Joint Genome Institute"/>
            <person name="Copeland A."/>
            <person name="Lucas S."/>
            <person name="Lapidus A."/>
            <person name="Barry K."/>
            <person name="Detter J.C."/>
            <person name="Glavina del Rio T."/>
            <person name="Hammon N."/>
            <person name="Israni S."/>
            <person name="Dalin E."/>
            <person name="Tice H."/>
            <person name="Pitluck S."/>
            <person name="Kiss H."/>
            <person name="Brettin T."/>
            <person name="Bruce D."/>
            <person name="Han C."/>
            <person name="Tapia R."/>
            <person name="Gilna P."/>
            <person name="Schmutz J."/>
            <person name="Larimer F."/>
            <person name="Land M."/>
            <person name="Hauser L."/>
            <person name="Kyrpides N."/>
            <person name="Mikhailova N."/>
            <person name="Miller C.D."/>
            <person name="Richardson P."/>
        </authorList>
    </citation>
    <scope>NUCLEOTIDE SEQUENCE [LARGE SCALE GENOMIC DNA]</scope>
    <source>
        <strain>KMS</strain>
    </source>
</reference>
<comment type="function">
    <text evidence="1">The RuvA-RuvB-RuvC complex processes Holliday junction (HJ) DNA during genetic recombination and DNA repair, while the RuvA-RuvB complex plays an important role in the rescue of blocked DNA replication forks via replication fork reversal (RFR). RuvA specifically binds to HJ cruciform DNA, conferring on it an open structure. The RuvB hexamer acts as an ATP-dependent pump, pulling dsDNA into and through the RuvAB complex. RuvB forms 2 homohexamers on either side of HJ DNA bound by 1 or 2 RuvA tetramers; 4 subunits per hexamer contact DNA at a time. Coordinated motions by a converter formed by DNA-disengaged RuvB subunits stimulates ATP hydrolysis and nucleotide exchange. Immobilization of the converter enables RuvB to convert the ATP-contained energy into a lever motion, pulling 2 nucleotides of DNA out of the RuvA tetramer per ATP hydrolyzed, thus driving DNA branch migration. The RuvB motors rotate together with the DNA substrate, which together with the progressing nucleotide cycle form the mechanistic basis for DNA recombination by continuous HJ branch migration. Branch migration allows RuvC to scan DNA until it finds its consensus sequence, where it cleaves and resolves cruciform DNA.</text>
</comment>
<comment type="catalytic activity">
    <reaction evidence="1">
        <text>ATP + H2O = ADP + phosphate + H(+)</text>
        <dbReference type="Rhea" id="RHEA:13065"/>
        <dbReference type="ChEBI" id="CHEBI:15377"/>
        <dbReference type="ChEBI" id="CHEBI:15378"/>
        <dbReference type="ChEBI" id="CHEBI:30616"/>
        <dbReference type="ChEBI" id="CHEBI:43474"/>
        <dbReference type="ChEBI" id="CHEBI:456216"/>
    </reaction>
</comment>
<comment type="subunit">
    <text evidence="1">Homohexamer. Forms an RuvA(8)-RuvB(12)-Holliday junction (HJ) complex. HJ DNA is sandwiched between 2 RuvA tetramers; dsDNA enters through RuvA and exits via RuvB. An RuvB hexamer assembles on each DNA strand where it exits the tetramer. Each RuvB hexamer is contacted by two RuvA subunits (via domain III) on 2 adjacent RuvB subunits; this complex drives branch migration. In the full resolvosome a probable DNA-RuvA(4)-RuvB(12)-RuvC(2) complex forms which resolves the HJ.</text>
</comment>
<comment type="subcellular location">
    <subcellularLocation>
        <location evidence="1">Cytoplasm</location>
    </subcellularLocation>
</comment>
<comment type="domain">
    <text evidence="1">Has 3 domains, the large (RuvB-L) and small ATPase (RuvB-S) domains and the C-terminal head (RuvB-H) domain. The head domain binds DNA, while the ATPase domains jointly bind ATP, ADP or are empty depending on the state of the subunit in the translocation cycle. During a single DNA translocation step the structure of each domain remains the same, but their relative positions change.</text>
</comment>
<comment type="similarity">
    <text evidence="1">Belongs to the RuvB family.</text>
</comment>
<keyword id="KW-0067">ATP-binding</keyword>
<keyword id="KW-0963">Cytoplasm</keyword>
<keyword id="KW-0227">DNA damage</keyword>
<keyword id="KW-0233">DNA recombination</keyword>
<keyword id="KW-0234">DNA repair</keyword>
<keyword id="KW-0238">DNA-binding</keyword>
<keyword id="KW-0378">Hydrolase</keyword>
<keyword id="KW-0547">Nucleotide-binding</keyword>
<accession>A1UFA4</accession>
<proteinExistence type="inferred from homology"/>
<feature type="chain" id="PRO_0000322817" description="Holliday junction branch migration complex subunit RuvB">
    <location>
        <begin position="1"/>
        <end position="357"/>
    </location>
</feature>
<feature type="region of interest" description="Large ATPase domain (RuvB-L)" evidence="1">
    <location>
        <begin position="1"/>
        <end position="195"/>
    </location>
</feature>
<feature type="region of interest" description="Disordered" evidence="2">
    <location>
        <begin position="1"/>
        <end position="27"/>
    </location>
</feature>
<feature type="region of interest" description="Small ATPAse domain (RuvB-S)" evidence="1">
    <location>
        <begin position="196"/>
        <end position="266"/>
    </location>
</feature>
<feature type="region of interest" description="Head domain (RuvB-H)" evidence="1">
    <location>
        <begin position="269"/>
        <end position="357"/>
    </location>
</feature>
<feature type="binding site" evidence="1">
    <location>
        <position position="34"/>
    </location>
    <ligand>
        <name>ATP</name>
        <dbReference type="ChEBI" id="CHEBI:30616"/>
    </ligand>
</feature>
<feature type="binding site" evidence="1">
    <location>
        <position position="35"/>
    </location>
    <ligand>
        <name>ATP</name>
        <dbReference type="ChEBI" id="CHEBI:30616"/>
    </ligand>
</feature>
<feature type="binding site" evidence="1">
    <location>
        <position position="76"/>
    </location>
    <ligand>
        <name>ATP</name>
        <dbReference type="ChEBI" id="CHEBI:30616"/>
    </ligand>
</feature>
<feature type="binding site" evidence="1">
    <location>
        <position position="79"/>
    </location>
    <ligand>
        <name>ATP</name>
        <dbReference type="ChEBI" id="CHEBI:30616"/>
    </ligand>
</feature>
<feature type="binding site" evidence="1">
    <location>
        <position position="80"/>
    </location>
    <ligand>
        <name>ATP</name>
        <dbReference type="ChEBI" id="CHEBI:30616"/>
    </ligand>
</feature>
<feature type="binding site" evidence="1">
    <location>
        <position position="80"/>
    </location>
    <ligand>
        <name>Mg(2+)</name>
        <dbReference type="ChEBI" id="CHEBI:18420"/>
    </ligand>
</feature>
<feature type="binding site" evidence="1">
    <location>
        <position position="81"/>
    </location>
    <ligand>
        <name>ATP</name>
        <dbReference type="ChEBI" id="CHEBI:30616"/>
    </ligand>
</feature>
<feature type="binding site" evidence="1">
    <location>
        <begin position="142"/>
        <end position="144"/>
    </location>
    <ligand>
        <name>ATP</name>
        <dbReference type="ChEBI" id="CHEBI:30616"/>
    </ligand>
</feature>
<feature type="binding site" evidence="1">
    <location>
        <position position="185"/>
    </location>
    <ligand>
        <name>ATP</name>
        <dbReference type="ChEBI" id="CHEBI:30616"/>
    </ligand>
</feature>
<feature type="binding site" evidence="1">
    <location>
        <position position="195"/>
    </location>
    <ligand>
        <name>ATP</name>
        <dbReference type="ChEBI" id="CHEBI:30616"/>
    </ligand>
</feature>
<feature type="binding site" evidence="1">
    <location>
        <position position="232"/>
    </location>
    <ligand>
        <name>ATP</name>
        <dbReference type="ChEBI" id="CHEBI:30616"/>
    </ligand>
</feature>
<feature type="binding site" evidence="1">
    <location>
        <position position="324"/>
    </location>
    <ligand>
        <name>DNA</name>
        <dbReference type="ChEBI" id="CHEBI:16991"/>
    </ligand>
</feature>
<feature type="binding site" evidence="1">
    <location>
        <position position="329"/>
    </location>
    <ligand>
        <name>DNA</name>
        <dbReference type="ChEBI" id="CHEBI:16991"/>
    </ligand>
</feature>
<dbReference type="EC" id="3.6.4.-" evidence="1"/>
<dbReference type="EMBL" id="CP000518">
    <property type="protein sequence ID" value="ABL91512.1"/>
    <property type="molecule type" value="Genomic_DNA"/>
</dbReference>
<dbReference type="SMR" id="A1UFA4"/>
<dbReference type="STRING" id="189918.Mkms_2314"/>
<dbReference type="KEGG" id="mkm:Mkms_2314"/>
<dbReference type="HOGENOM" id="CLU_055599_1_0_11"/>
<dbReference type="OrthoDB" id="9804478at2"/>
<dbReference type="GO" id="GO:0005737">
    <property type="term" value="C:cytoplasm"/>
    <property type="evidence" value="ECO:0007669"/>
    <property type="project" value="UniProtKB-SubCell"/>
</dbReference>
<dbReference type="GO" id="GO:0048476">
    <property type="term" value="C:Holliday junction resolvase complex"/>
    <property type="evidence" value="ECO:0007669"/>
    <property type="project" value="UniProtKB-UniRule"/>
</dbReference>
<dbReference type="GO" id="GO:0005524">
    <property type="term" value="F:ATP binding"/>
    <property type="evidence" value="ECO:0007669"/>
    <property type="project" value="UniProtKB-UniRule"/>
</dbReference>
<dbReference type="GO" id="GO:0016887">
    <property type="term" value="F:ATP hydrolysis activity"/>
    <property type="evidence" value="ECO:0007669"/>
    <property type="project" value="InterPro"/>
</dbReference>
<dbReference type="GO" id="GO:0000400">
    <property type="term" value="F:four-way junction DNA binding"/>
    <property type="evidence" value="ECO:0007669"/>
    <property type="project" value="UniProtKB-UniRule"/>
</dbReference>
<dbReference type="GO" id="GO:0009378">
    <property type="term" value="F:four-way junction helicase activity"/>
    <property type="evidence" value="ECO:0007669"/>
    <property type="project" value="InterPro"/>
</dbReference>
<dbReference type="GO" id="GO:0006310">
    <property type="term" value="P:DNA recombination"/>
    <property type="evidence" value="ECO:0007669"/>
    <property type="project" value="UniProtKB-UniRule"/>
</dbReference>
<dbReference type="GO" id="GO:0006281">
    <property type="term" value="P:DNA repair"/>
    <property type="evidence" value="ECO:0007669"/>
    <property type="project" value="UniProtKB-UniRule"/>
</dbReference>
<dbReference type="CDD" id="cd00009">
    <property type="entry name" value="AAA"/>
    <property type="match status" value="1"/>
</dbReference>
<dbReference type="Gene3D" id="1.10.8.60">
    <property type="match status" value="1"/>
</dbReference>
<dbReference type="Gene3D" id="3.40.50.300">
    <property type="entry name" value="P-loop containing nucleotide triphosphate hydrolases"/>
    <property type="match status" value="1"/>
</dbReference>
<dbReference type="Gene3D" id="1.10.10.10">
    <property type="entry name" value="Winged helix-like DNA-binding domain superfamily/Winged helix DNA-binding domain"/>
    <property type="match status" value="1"/>
</dbReference>
<dbReference type="HAMAP" id="MF_00016">
    <property type="entry name" value="DNA_HJ_migration_RuvB"/>
    <property type="match status" value="1"/>
</dbReference>
<dbReference type="InterPro" id="IPR003593">
    <property type="entry name" value="AAA+_ATPase"/>
</dbReference>
<dbReference type="InterPro" id="IPR041445">
    <property type="entry name" value="AAA_lid_4"/>
</dbReference>
<dbReference type="InterPro" id="IPR004605">
    <property type="entry name" value="DNA_helicase_Holl-junc_RuvB"/>
</dbReference>
<dbReference type="InterPro" id="IPR027417">
    <property type="entry name" value="P-loop_NTPase"/>
</dbReference>
<dbReference type="InterPro" id="IPR008824">
    <property type="entry name" value="RuvB-like_N"/>
</dbReference>
<dbReference type="InterPro" id="IPR008823">
    <property type="entry name" value="RuvB_C"/>
</dbReference>
<dbReference type="InterPro" id="IPR036388">
    <property type="entry name" value="WH-like_DNA-bd_sf"/>
</dbReference>
<dbReference type="InterPro" id="IPR036390">
    <property type="entry name" value="WH_DNA-bd_sf"/>
</dbReference>
<dbReference type="NCBIfam" id="NF000868">
    <property type="entry name" value="PRK00080.1"/>
    <property type="match status" value="1"/>
</dbReference>
<dbReference type="NCBIfam" id="TIGR00635">
    <property type="entry name" value="ruvB"/>
    <property type="match status" value="1"/>
</dbReference>
<dbReference type="PANTHER" id="PTHR42848">
    <property type="match status" value="1"/>
</dbReference>
<dbReference type="PANTHER" id="PTHR42848:SF1">
    <property type="entry name" value="HOLLIDAY JUNCTION BRANCH MIGRATION COMPLEX SUBUNIT RUVB"/>
    <property type="match status" value="1"/>
</dbReference>
<dbReference type="Pfam" id="PF17864">
    <property type="entry name" value="AAA_lid_4"/>
    <property type="match status" value="1"/>
</dbReference>
<dbReference type="Pfam" id="PF05491">
    <property type="entry name" value="RuvB_C"/>
    <property type="match status" value="1"/>
</dbReference>
<dbReference type="Pfam" id="PF05496">
    <property type="entry name" value="RuvB_N"/>
    <property type="match status" value="1"/>
</dbReference>
<dbReference type="SMART" id="SM00382">
    <property type="entry name" value="AAA"/>
    <property type="match status" value="1"/>
</dbReference>
<dbReference type="SUPFAM" id="SSF52540">
    <property type="entry name" value="P-loop containing nucleoside triphosphate hydrolases"/>
    <property type="match status" value="1"/>
</dbReference>
<dbReference type="SUPFAM" id="SSF46785">
    <property type="entry name" value="Winged helix' DNA-binding domain"/>
    <property type="match status" value="1"/>
</dbReference>
<evidence type="ECO:0000255" key="1">
    <source>
        <dbReference type="HAMAP-Rule" id="MF_00016"/>
    </source>
</evidence>
<evidence type="ECO:0000256" key="2">
    <source>
        <dbReference type="SAM" id="MobiDB-lite"/>
    </source>
</evidence>